<feature type="chain" id="PRO_0000155629" description="Putative manganese efflux pump MntP">
    <location>
        <begin position="1"/>
        <end position="182"/>
    </location>
</feature>
<feature type="transmembrane region" description="Helical" evidence="1">
    <location>
        <begin position="6"/>
        <end position="26"/>
    </location>
</feature>
<feature type="transmembrane region" description="Helical" evidence="1">
    <location>
        <begin position="37"/>
        <end position="57"/>
    </location>
</feature>
<feature type="transmembrane region" description="Helical" evidence="1">
    <location>
        <begin position="71"/>
        <end position="91"/>
    </location>
</feature>
<feature type="transmembrane region" description="Helical" evidence="1">
    <location>
        <begin position="101"/>
        <end position="121"/>
    </location>
</feature>
<feature type="transmembrane region" description="Helical" evidence="1">
    <location>
        <begin position="131"/>
        <end position="151"/>
    </location>
</feature>
<feature type="transmembrane region" description="Helical" evidence="1">
    <location>
        <begin position="162"/>
        <end position="182"/>
    </location>
</feature>
<name>MNTP_BACCR</name>
<protein>
    <recommendedName>
        <fullName evidence="1">Putative manganese efflux pump MntP</fullName>
    </recommendedName>
</protein>
<comment type="function">
    <text evidence="1">Probably functions as a manganese efflux pump.</text>
</comment>
<comment type="subcellular location">
    <subcellularLocation>
        <location evidence="1">Cell membrane</location>
        <topology evidence="1">Multi-pass membrane protein</topology>
    </subcellularLocation>
</comment>
<comment type="similarity">
    <text evidence="1">Belongs to the MntP (TC 9.B.29) family.</text>
</comment>
<proteinExistence type="inferred from homology"/>
<reference key="1">
    <citation type="journal article" date="2003" name="Nature">
        <title>Genome sequence of Bacillus cereus and comparative analysis with Bacillus anthracis.</title>
        <authorList>
            <person name="Ivanova N."/>
            <person name="Sorokin A."/>
            <person name="Anderson I."/>
            <person name="Galleron N."/>
            <person name="Candelon B."/>
            <person name="Kapatral V."/>
            <person name="Bhattacharyya A."/>
            <person name="Reznik G."/>
            <person name="Mikhailova N."/>
            <person name="Lapidus A."/>
            <person name="Chu L."/>
            <person name="Mazur M."/>
            <person name="Goltsman E."/>
            <person name="Larsen N."/>
            <person name="D'Souza M."/>
            <person name="Walunas T."/>
            <person name="Grechkin Y."/>
            <person name="Pusch G."/>
            <person name="Haselkorn R."/>
            <person name="Fonstein M."/>
            <person name="Ehrlich S.D."/>
            <person name="Overbeek R."/>
            <person name="Kyrpides N.C."/>
        </authorList>
    </citation>
    <scope>NUCLEOTIDE SEQUENCE [LARGE SCALE GENOMIC DNA]</scope>
    <source>
        <strain>ATCC 14579 / DSM 31 / CCUG 7414 / JCM 2152 / NBRC 15305 / NCIMB 9373 / NCTC 2599 / NRRL B-3711</strain>
    </source>
</reference>
<organism>
    <name type="scientific">Bacillus cereus (strain ATCC 14579 / DSM 31 / CCUG 7414 / JCM 2152 / NBRC 15305 / NCIMB 9373 / NCTC 2599 / NRRL B-3711)</name>
    <dbReference type="NCBI Taxonomy" id="226900"/>
    <lineage>
        <taxon>Bacteria</taxon>
        <taxon>Bacillati</taxon>
        <taxon>Bacillota</taxon>
        <taxon>Bacilli</taxon>
        <taxon>Bacillales</taxon>
        <taxon>Bacillaceae</taxon>
        <taxon>Bacillus</taxon>
        <taxon>Bacillus cereus group</taxon>
    </lineage>
</organism>
<gene>
    <name evidence="1" type="primary">mntP</name>
    <name type="ordered locus">BC_5324</name>
</gene>
<sequence length="182" mass="19787">MTFEQLIPLIIMAFALGMDAFSVSLGMGMMPLKLRQILYIGMTIGIFHIIMPFIGMVLGRFLSEKYGDIAHFAGAILLIGLGFYIVYSTILQNEETRTAPIGISLFVFAFGVSIDSFSVGLSLGIYGAQTIITILLFGFVSMLLAWIGLLIGRHAKDMLGTYGEIVGGIILVGFGLYILFPI</sequence>
<evidence type="ECO:0000255" key="1">
    <source>
        <dbReference type="HAMAP-Rule" id="MF_01521"/>
    </source>
</evidence>
<dbReference type="EMBL" id="AE016877">
    <property type="protein sequence ID" value="AAP12187.1"/>
    <property type="molecule type" value="Genomic_DNA"/>
</dbReference>
<dbReference type="RefSeq" id="NP_834986.1">
    <property type="nucleotide sequence ID" value="NC_004722.1"/>
</dbReference>
<dbReference type="RefSeq" id="WP_000142475.1">
    <property type="nucleotide sequence ID" value="NZ_CP138336.1"/>
</dbReference>
<dbReference type="STRING" id="226900.BC_5324"/>
<dbReference type="KEGG" id="bce:BC5324"/>
<dbReference type="PATRIC" id="fig|226900.8.peg.5497"/>
<dbReference type="HOGENOM" id="CLU_096410_1_0_9"/>
<dbReference type="OrthoDB" id="1679700at2"/>
<dbReference type="Proteomes" id="UP000001417">
    <property type="component" value="Chromosome"/>
</dbReference>
<dbReference type="GO" id="GO:0005886">
    <property type="term" value="C:plasma membrane"/>
    <property type="evidence" value="ECO:0000318"/>
    <property type="project" value="GO_Central"/>
</dbReference>
<dbReference type="GO" id="GO:0005384">
    <property type="term" value="F:manganese ion transmembrane transporter activity"/>
    <property type="evidence" value="ECO:0000318"/>
    <property type="project" value="GO_Central"/>
</dbReference>
<dbReference type="GO" id="GO:0030026">
    <property type="term" value="P:intracellular manganese ion homeostasis"/>
    <property type="evidence" value="ECO:0000318"/>
    <property type="project" value="GO_Central"/>
</dbReference>
<dbReference type="GO" id="GO:0140048">
    <property type="term" value="P:manganese ion export across plasma membrane"/>
    <property type="evidence" value="ECO:0000318"/>
    <property type="project" value="GO_Central"/>
</dbReference>
<dbReference type="HAMAP" id="MF_01521">
    <property type="entry name" value="MntP_pump"/>
    <property type="match status" value="1"/>
</dbReference>
<dbReference type="InterPro" id="IPR003810">
    <property type="entry name" value="Mntp/YtaF"/>
</dbReference>
<dbReference type="InterPro" id="IPR022929">
    <property type="entry name" value="Put_MntP"/>
</dbReference>
<dbReference type="PANTHER" id="PTHR35529">
    <property type="entry name" value="MANGANESE EFFLUX PUMP MNTP-RELATED"/>
    <property type="match status" value="1"/>
</dbReference>
<dbReference type="PANTHER" id="PTHR35529:SF1">
    <property type="entry name" value="MANGANESE EFFLUX PUMP MNTP-RELATED"/>
    <property type="match status" value="1"/>
</dbReference>
<dbReference type="Pfam" id="PF02659">
    <property type="entry name" value="Mntp"/>
    <property type="match status" value="1"/>
</dbReference>
<keyword id="KW-1003">Cell membrane</keyword>
<keyword id="KW-0406">Ion transport</keyword>
<keyword id="KW-0464">Manganese</keyword>
<keyword id="KW-0472">Membrane</keyword>
<keyword id="KW-1185">Reference proteome</keyword>
<keyword id="KW-0812">Transmembrane</keyword>
<keyword id="KW-1133">Transmembrane helix</keyword>
<keyword id="KW-0813">Transport</keyword>
<accession>Q814U5</accession>